<comment type="catalytic activity">
    <reaction evidence="1">
        <text>(2R)-3-phosphoglycerate + ATP = (2R)-3-phospho-glyceroyl phosphate + ADP</text>
        <dbReference type="Rhea" id="RHEA:14801"/>
        <dbReference type="ChEBI" id="CHEBI:30616"/>
        <dbReference type="ChEBI" id="CHEBI:57604"/>
        <dbReference type="ChEBI" id="CHEBI:58272"/>
        <dbReference type="ChEBI" id="CHEBI:456216"/>
        <dbReference type="EC" id="2.7.2.3"/>
    </reaction>
</comment>
<comment type="pathway">
    <text evidence="1">Carbohydrate degradation; glycolysis; pyruvate from D-glyceraldehyde 3-phosphate: step 2/5.</text>
</comment>
<comment type="subunit">
    <text evidence="1">Monomer.</text>
</comment>
<comment type="subcellular location">
    <subcellularLocation>
        <location evidence="1">Cytoplasm</location>
    </subcellularLocation>
</comment>
<comment type="similarity">
    <text evidence="1">Belongs to the phosphoglycerate kinase family.</text>
</comment>
<proteinExistence type="inferred from homology"/>
<organism>
    <name type="scientific">Clostridium botulinum (strain Loch Maree / Type A3)</name>
    <dbReference type="NCBI Taxonomy" id="498214"/>
    <lineage>
        <taxon>Bacteria</taxon>
        <taxon>Bacillati</taxon>
        <taxon>Bacillota</taxon>
        <taxon>Clostridia</taxon>
        <taxon>Eubacteriales</taxon>
        <taxon>Clostridiaceae</taxon>
        <taxon>Clostridium</taxon>
    </lineage>
</organism>
<keyword id="KW-0067">ATP-binding</keyword>
<keyword id="KW-0963">Cytoplasm</keyword>
<keyword id="KW-0324">Glycolysis</keyword>
<keyword id="KW-0418">Kinase</keyword>
<keyword id="KW-0547">Nucleotide-binding</keyword>
<keyword id="KW-0808">Transferase</keyword>
<gene>
    <name evidence="1" type="primary">pgk</name>
    <name type="ordered locus">CLK_3409</name>
</gene>
<reference key="1">
    <citation type="journal article" date="2007" name="PLoS ONE">
        <title>Analysis of the neurotoxin complex genes in Clostridium botulinum A1-A4 and B1 strains: BoNT/A3, /Ba4 and /B1 clusters are located within plasmids.</title>
        <authorList>
            <person name="Smith T.J."/>
            <person name="Hill K.K."/>
            <person name="Foley B.T."/>
            <person name="Detter J.C."/>
            <person name="Munk A.C."/>
            <person name="Bruce D.C."/>
            <person name="Doggett N.A."/>
            <person name="Smith L.A."/>
            <person name="Marks J.D."/>
            <person name="Xie G."/>
            <person name="Brettin T.S."/>
        </authorList>
    </citation>
    <scope>NUCLEOTIDE SEQUENCE [LARGE SCALE GENOMIC DNA]</scope>
    <source>
        <strain>Loch Maree / Type A3</strain>
    </source>
</reference>
<accession>B1KTJ5</accession>
<name>PGK_CLOBM</name>
<sequence>MNYNKKSIEDIDVKSKKVLVRCDFNVPLNEGKITDENRLVGALPTVKYLMEKGAKIILCSHMGKPKGEPKKELSLLPVAKRLSEMLNKEVVFADDDNVVGENAKKAVEDMKDGDIVLLQNTRYRKEETKNEEIFSKELASLADVFVNDAFGTAHRAHCSTVGVTHYLKEAACGYLIQKELKFLGNAVETPERPFVAILGGAKVSDKINVINNLLDKVDTLIIGGGMGYTFLKSLGYTVGDSLLEEDKVEYAKEMINKAKEKGVNFLLPVDITIADRFDKDAEPIVTEDQNVKEGYMGLDIGSKTAKIYADAIKSAKTVIWNGPMGVFEFKNFANGTIEVAKAMADSDAVTIIGGGDSAAAVNIFGFGDKMSHISTGGGASLEFLEGKELPGIAALNDK</sequence>
<evidence type="ECO:0000255" key="1">
    <source>
        <dbReference type="HAMAP-Rule" id="MF_00145"/>
    </source>
</evidence>
<protein>
    <recommendedName>
        <fullName evidence="1">Phosphoglycerate kinase</fullName>
        <ecNumber evidence="1">2.7.2.3</ecNumber>
    </recommendedName>
</protein>
<dbReference type="EC" id="2.7.2.3" evidence="1"/>
<dbReference type="EMBL" id="CP000962">
    <property type="protein sequence ID" value="ACA55850.1"/>
    <property type="molecule type" value="Genomic_DNA"/>
</dbReference>
<dbReference type="RefSeq" id="WP_012343779.1">
    <property type="nucleotide sequence ID" value="NC_010520.1"/>
</dbReference>
<dbReference type="SMR" id="B1KTJ5"/>
<dbReference type="KEGG" id="cbl:CLK_3409"/>
<dbReference type="HOGENOM" id="CLU_025427_0_2_9"/>
<dbReference type="UniPathway" id="UPA00109">
    <property type="reaction ID" value="UER00185"/>
</dbReference>
<dbReference type="GO" id="GO:0005829">
    <property type="term" value="C:cytosol"/>
    <property type="evidence" value="ECO:0007669"/>
    <property type="project" value="TreeGrafter"/>
</dbReference>
<dbReference type="GO" id="GO:0043531">
    <property type="term" value="F:ADP binding"/>
    <property type="evidence" value="ECO:0007669"/>
    <property type="project" value="TreeGrafter"/>
</dbReference>
<dbReference type="GO" id="GO:0005524">
    <property type="term" value="F:ATP binding"/>
    <property type="evidence" value="ECO:0007669"/>
    <property type="project" value="UniProtKB-KW"/>
</dbReference>
<dbReference type="GO" id="GO:0004618">
    <property type="term" value="F:phosphoglycerate kinase activity"/>
    <property type="evidence" value="ECO:0007669"/>
    <property type="project" value="UniProtKB-UniRule"/>
</dbReference>
<dbReference type="GO" id="GO:0006094">
    <property type="term" value="P:gluconeogenesis"/>
    <property type="evidence" value="ECO:0007669"/>
    <property type="project" value="TreeGrafter"/>
</dbReference>
<dbReference type="GO" id="GO:0006096">
    <property type="term" value="P:glycolytic process"/>
    <property type="evidence" value="ECO:0007669"/>
    <property type="project" value="UniProtKB-UniRule"/>
</dbReference>
<dbReference type="CDD" id="cd00318">
    <property type="entry name" value="Phosphoglycerate_kinase"/>
    <property type="match status" value="1"/>
</dbReference>
<dbReference type="FunFam" id="3.40.50.1260:FF:000007">
    <property type="entry name" value="Phosphoglycerate kinase"/>
    <property type="match status" value="1"/>
</dbReference>
<dbReference type="FunFam" id="3.40.50.1260:FF:000008">
    <property type="entry name" value="Phosphoglycerate kinase"/>
    <property type="match status" value="1"/>
</dbReference>
<dbReference type="Gene3D" id="3.40.50.1260">
    <property type="entry name" value="Phosphoglycerate kinase, N-terminal domain"/>
    <property type="match status" value="2"/>
</dbReference>
<dbReference type="HAMAP" id="MF_00145">
    <property type="entry name" value="Phosphoglyc_kinase"/>
    <property type="match status" value="1"/>
</dbReference>
<dbReference type="InterPro" id="IPR001576">
    <property type="entry name" value="Phosphoglycerate_kinase"/>
</dbReference>
<dbReference type="InterPro" id="IPR015911">
    <property type="entry name" value="Phosphoglycerate_kinase_CS"/>
</dbReference>
<dbReference type="InterPro" id="IPR015824">
    <property type="entry name" value="Phosphoglycerate_kinase_N"/>
</dbReference>
<dbReference type="InterPro" id="IPR036043">
    <property type="entry name" value="Phosphoglycerate_kinase_sf"/>
</dbReference>
<dbReference type="PANTHER" id="PTHR11406">
    <property type="entry name" value="PHOSPHOGLYCERATE KINASE"/>
    <property type="match status" value="1"/>
</dbReference>
<dbReference type="PANTHER" id="PTHR11406:SF23">
    <property type="entry name" value="PHOSPHOGLYCERATE KINASE 1, CHLOROPLASTIC-RELATED"/>
    <property type="match status" value="1"/>
</dbReference>
<dbReference type="Pfam" id="PF00162">
    <property type="entry name" value="PGK"/>
    <property type="match status" value="1"/>
</dbReference>
<dbReference type="PIRSF" id="PIRSF000724">
    <property type="entry name" value="Pgk"/>
    <property type="match status" value="1"/>
</dbReference>
<dbReference type="PRINTS" id="PR00477">
    <property type="entry name" value="PHGLYCKINASE"/>
</dbReference>
<dbReference type="SUPFAM" id="SSF53748">
    <property type="entry name" value="Phosphoglycerate kinase"/>
    <property type="match status" value="1"/>
</dbReference>
<dbReference type="PROSITE" id="PS00111">
    <property type="entry name" value="PGLYCERATE_KINASE"/>
    <property type="match status" value="1"/>
</dbReference>
<feature type="chain" id="PRO_1000096333" description="Phosphoglycerate kinase">
    <location>
        <begin position="1"/>
        <end position="398"/>
    </location>
</feature>
<feature type="binding site" evidence="1">
    <location>
        <begin position="23"/>
        <end position="25"/>
    </location>
    <ligand>
        <name>substrate</name>
    </ligand>
</feature>
<feature type="binding site" evidence="1">
    <location>
        <position position="38"/>
    </location>
    <ligand>
        <name>substrate</name>
    </ligand>
</feature>
<feature type="binding site" evidence="1">
    <location>
        <begin position="61"/>
        <end position="64"/>
    </location>
    <ligand>
        <name>substrate</name>
    </ligand>
</feature>
<feature type="binding site" evidence="1">
    <location>
        <position position="122"/>
    </location>
    <ligand>
        <name>substrate</name>
    </ligand>
</feature>
<feature type="binding site" evidence="1">
    <location>
        <position position="155"/>
    </location>
    <ligand>
        <name>substrate</name>
    </ligand>
</feature>
<feature type="binding site" evidence="1">
    <location>
        <position position="206"/>
    </location>
    <ligand>
        <name>ATP</name>
        <dbReference type="ChEBI" id="CHEBI:30616"/>
    </ligand>
</feature>
<feature type="binding site" evidence="1">
    <location>
        <position position="297"/>
    </location>
    <ligand>
        <name>ATP</name>
        <dbReference type="ChEBI" id="CHEBI:30616"/>
    </ligand>
</feature>
<feature type="binding site" evidence="1">
    <location>
        <position position="328"/>
    </location>
    <ligand>
        <name>ATP</name>
        <dbReference type="ChEBI" id="CHEBI:30616"/>
    </ligand>
</feature>
<feature type="binding site" evidence="1">
    <location>
        <begin position="354"/>
        <end position="357"/>
    </location>
    <ligand>
        <name>ATP</name>
        <dbReference type="ChEBI" id="CHEBI:30616"/>
    </ligand>
</feature>